<reference key="1">
    <citation type="journal article" date="2003" name="Nat. Genet.">
        <title>Comparative analysis of the genome sequences of Bordetella pertussis, Bordetella parapertussis and Bordetella bronchiseptica.</title>
        <authorList>
            <person name="Parkhill J."/>
            <person name="Sebaihia M."/>
            <person name="Preston A."/>
            <person name="Murphy L.D."/>
            <person name="Thomson N.R."/>
            <person name="Harris D.E."/>
            <person name="Holden M.T.G."/>
            <person name="Churcher C.M."/>
            <person name="Bentley S.D."/>
            <person name="Mungall K.L."/>
            <person name="Cerdeno-Tarraga A.-M."/>
            <person name="Temple L."/>
            <person name="James K.D."/>
            <person name="Harris B."/>
            <person name="Quail M.A."/>
            <person name="Achtman M."/>
            <person name="Atkin R."/>
            <person name="Baker S."/>
            <person name="Basham D."/>
            <person name="Bason N."/>
            <person name="Cherevach I."/>
            <person name="Chillingworth T."/>
            <person name="Collins M."/>
            <person name="Cronin A."/>
            <person name="Davis P."/>
            <person name="Doggett J."/>
            <person name="Feltwell T."/>
            <person name="Goble A."/>
            <person name="Hamlin N."/>
            <person name="Hauser H."/>
            <person name="Holroyd S."/>
            <person name="Jagels K."/>
            <person name="Leather S."/>
            <person name="Moule S."/>
            <person name="Norberczak H."/>
            <person name="O'Neil S."/>
            <person name="Ormond D."/>
            <person name="Price C."/>
            <person name="Rabbinowitsch E."/>
            <person name="Rutter S."/>
            <person name="Sanders M."/>
            <person name="Saunders D."/>
            <person name="Seeger K."/>
            <person name="Sharp S."/>
            <person name="Simmonds M."/>
            <person name="Skelton J."/>
            <person name="Squares R."/>
            <person name="Squares S."/>
            <person name="Stevens K."/>
            <person name="Unwin L."/>
            <person name="Whitehead S."/>
            <person name="Barrell B.G."/>
            <person name="Maskell D.J."/>
        </authorList>
    </citation>
    <scope>NUCLEOTIDE SEQUENCE [LARGE SCALE GENOMIC DNA]</scope>
    <source>
        <strain>ATCC BAA-588 / NCTC 13252 / RB50</strain>
    </source>
</reference>
<feature type="chain" id="PRO_0000380923" description="Putative 8-amino-7-oxononanoate synthase">
    <location>
        <begin position="1"/>
        <end position="399"/>
    </location>
</feature>
<feature type="binding site" evidence="1">
    <location>
        <position position="24"/>
    </location>
    <ligand>
        <name>substrate</name>
    </ligand>
</feature>
<feature type="binding site" evidence="1">
    <location>
        <begin position="111"/>
        <end position="112"/>
    </location>
    <ligand>
        <name>pyridoxal 5'-phosphate</name>
        <dbReference type="ChEBI" id="CHEBI:597326"/>
    </ligand>
</feature>
<feature type="binding site" evidence="1">
    <location>
        <position position="141"/>
    </location>
    <ligand>
        <name>substrate</name>
    </ligand>
</feature>
<feature type="binding site" evidence="1">
    <location>
        <position position="189"/>
    </location>
    <ligand>
        <name>pyridoxal 5'-phosphate</name>
        <dbReference type="ChEBI" id="CHEBI:597326"/>
    </ligand>
</feature>
<feature type="binding site" evidence="1">
    <location>
        <begin position="214"/>
        <end position="217"/>
    </location>
    <ligand>
        <name>pyridoxal 5'-phosphate</name>
        <dbReference type="ChEBI" id="CHEBI:597326"/>
    </ligand>
</feature>
<feature type="binding site" evidence="1">
    <location>
        <begin position="243"/>
        <end position="246"/>
    </location>
    <ligand>
        <name>pyridoxal 5'-phosphate</name>
        <dbReference type="ChEBI" id="CHEBI:597326"/>
    </ligand>
</feature>
<feature type="binding site" evidence="1">
    <location>
        <position position="360"/>
    </location>
    <ligand>
        <name>substrate</name>
    </ligand>
</feature>
<feature type="modified residue" description="N6-(pyridoxal phosphate)lysine" evidence="1">
    <location>
        <position position="246"/>
    </location>
</feature>
<accession>Q7WH76</accession>
<evidence type="ECO:0000250" key="1"/>
<evidence type="ECO:0000305" key="2"/>
<proteinExistence type="inferred from homology"/>
<dbReference type="EC" id="2.3.1.47"/>
<dbReference type="EMBL" id="BX640447">
    <property type="protein sequence ID" value="CAE33825.1"/>
    <property type="molecule type" value="Genomic_DNA"/>
</dbReference>
<dbReference type="SMR" id="Q7WH76"/>
<dbReference type="KEGG" id="bbr:BB3333"/>
<dbReference type="eggNOG" id="COG0156">
    <property type="taxonomic scope" value="Bacteria"/>
</dbReference>
<dbReference type="HOGENOM" id="CLU_015846_11_2_4"/>
<dbReference type="UniPathway" id="UPA00078"/>
<dbReference type="Proteomes" id="UP000001027">
    <property type="component" value="Chromosome"/>
</dbReference>
<dbReference type="GO" id="GO:0008710">
    <property type="term" value="F:8-amino-7-oxononanoate synthase activity"/>
    <property type="evidence" value="ECO:0007669"/>
    <property type="project" value="UniProtKB-EC"/>
</dbReference>
<dbReference type="GO" id="GO:0030170">
    <property type="term" value="F:pyridoxal phosphate binding"/>
    <property type="evidence" value="ECO:0007669"/>
    <property type="project" value="InterPro"/>
</dbReference>
<dbReference type="GO" id="GO:0009102">
    <property type="term" value="P:biotin biosynthetic process"/>
    <property type="evidence" value="ECO:0007669"/>
    <property type="project" value="UniProtKB-UniPathway"/>
</dbReference>
<dbReference type="Gene3D" id="3.90.1150.10">
    <property type="entry name" value="Aspartate Aminotransferase, domain 1"/>
    <property type="match status" value="1"/>
</dbReference>
<dbReference type="Gene3D" id="3.40.640.10">
    <property type="entry name" value="Type I PLP-dependent aspartate aminotransferase-like (Major domain)"/>
    <property type="match status" value="1"/>
</dbReference>
<dbReference type="InterPro" id="IPR001917">
    <property type="entry name" value="Aminotrans_II_pyridoxalP_BS"/>
</dbReference>
<dbReference type="InterPro" id="IPR004839">
    <property type="entry name" value="Aminotransferase_I/II_large"/>
</dbReference>
<dbReference type="InterPro" id="IPR050087">
    <property type="entry name" value="AON_synthase_class-II"/>
</dbReference>
<dbReference type="InterPro" id="IPR004723">
    <property type="entry name" value="AONS_Archaea/Proteobacteria"/>
</dbReference>
<dbReference type="InterPro" id="IPR015424">
    <property type="entry name" value="PyrdxlP-dep_Trfase"/>
</dbReference>
<dbReference type="InterPro" id="IPR015421">
    <property type="entry name" value="PyrdxlP-dep_Trfase_major"/>
</dbReference>
<dbReference type="InterPro" id="IPR015422">
    <property type="entry name" value="PyrdxlP-dep_Trfase_small"/>
</dbReference>
<dbReference type="NCBIfam" id="TIGR00858">
    <property type="entry name" value="bioF"/>
    <property type="match status" value="1"/>
</dbReference>
<dbReference type="PANTHER" id="PTHR13693:SF100">
    <property type="entry name" value="8-AMINO-7-OXONONANOATE SYNTHASE"/>
    <property type="match status" value="1"/>
</dbReference>
<dbReference type="PANTHER" id="PTHR13693">
    <property type="entry name" value="CLASS II AMINOTRANSFERASE/8-AMINO-7-OXONONANOATE SYNTHASE"/>
    <property type="match status" value="1"/>
</dbReference>
<dbReference type="Pfam" id="PF00155">
    <property type="entry name" value="Aminotran_1_2"/>
    <property type="match status" value="1"/>
</dbReference>
<dbReference type="SUPFAM" id="SSF53383">
    <property type="entry name" value="PLP-dependent transferases"/>
    <property type="match status" value="1"/>
</dbReference>
<dbReference type="PROSITE" id="PS00599">
    <property type="entry name" value="AA_TRANSFER_CLASS_2"/>
    <property type="match status" value="1"/>
</dbReference>
<organism>
    <name type="scientific">Bordetella bronchiseptica (strain ATCC BAA-588 / NCTC 13252 / RB50)</name>
    <name type="common">Alcaligenes bronchisepticus</name>
    <dbReference type="NCBI Taxonomy" id="257310"/>
    <lineage>
        <taxon>Bacteria</taxon>
        <taxon>Pseudomonadati</taxon>
        <taxon>Pseudomonadota</taxon>
        <taxon>Betaproteobacteria</taxon>
        <taxon>Burkholderiales</taxon>
        <taxon>Alcaligenaceae</taxon>
        <taxon>Bordetella</taxon>
    </lineage>
</organism>
<keyword id="KW-0093">Biotin biosynthesis</keyword>
<keyword id="KW-0663">Pyridoxal phosphate</keyword>
<keyword id="KW-0808">Transferase</keyword>
<gene>
    <name type="primary">bioF</name>
    <name type="ordered locus">BB3333</name>
</gene>
<protein>
    <recommendedName>
        <fullName>Putative 8-amino-7-oxononanoate synthase</fullName>
        <shortName>AONS</shortName>
        <ecNumber>2.3.1.47</ecNumber>
    </recommendedName>
    <alternativeName>
        <fullName>7-keto-8-amino-pelargonic acid synthase</fullName>
        <shortName>7-KAP synthase</shortName>
    </alternativeName>
    <alternativeName>
        <fullName>8-amino-7-ketopelargonate synthase</fullName>
    </alternativeName>
</protein>
<comment type="function">
    <text evidence="1">Catalyzes the decarboxylative condensation of pimeloyl-[acyl-carrier protein] and L-alanine to produce 8-amino-7-oxononanoate (AON), [acyl-carrier protein], and carbon dioxide.</text>
</comment>
<comment type="catalytic activity">
    <reaction>
        <text>6-carboxyhexanoyl-[ACP] + L-alanine + H(+) = (8S)-8-amino-7-oxononanoate + holo-[ACP] + CO2</text>
        <dbReference type="Rhea" id="RHEA:42288"/>
        <dbReference type="Rhea" id="RHEA-COMP:9685"/>
        <dbReference type="Rhea" id="RHEA-COMP:9955"/>
        <dbReference type="ChEBI" id="CHEBI:15378"/>
        <dbReference type="ChEBI" id="CHEBI:16526"/>
        <dbReference type="ChEBI" id="CHEBI:57972"/>
        <dbReference type="ChEBI" id="CHEBI:64479"/>
        <dbReference type="ChEBI" id="CHEBI:78846"/>
        <dbReference type="ChEBI" id="CHEBI:149468"/>
        <dbReference type="EC" id="2.3.1.47"/>
    </reaction>
</comment>
<comment type="cofactor">
    <cofactor evidence="1">
        <name>pyridoxal 5'-phosphate</name>
        <dbReference type="ChEBI" id="CHEBI:597326"/>
    </cofactor>
</comment>
<comment type="pathway">
    <text>Cofactor biosynthesis; biotin biosynthesis.</text>
</comment>
<comment type="subunit">
    <text evidence="1">Homodimer.</text>
</comment>
<comment type="similarity">
    <text evidence="2">Belongs to the class-II pyridoxal-phosphate-dependent aminotransferase family. BioF subfamily.</text>
</comment>
<name>BIOF_BORBR</name>
<sequence length="399" mass="41621">MSMSKLDSLFTAALEQAAQRQVRRRLRRATAAPPGRLALDGRTLVNFSSNDYLGLARHPLLAERASLWATRHGAGAQASRLVCGNLDLHEQVEAKLARLKGTEAALLLASGWQANAAVLPALFKAAAAQGEPQVYTDRLNHASLHHGCQAAGVRQIRFRHNDLAHLEHLLAERAGAPGARFIVTESVFSMDGDRADVPALAALAARHHAFLYLDEAHATGVLGPRGMGLAGLAPGGVDLAMGTFSKGLGSFGAYVAGSRALCDYLVNACSGFIYTTALPPAVLGAIDAALDLVPRLDQARAALLGHGERLRASLAAQGIDCGASSTQIVPAIVGDAGHALALAAELERRGLLAVAIRPPTVPAGTSRLRIALSAAHGEAELDQLIEALAAGWRAVRQAA</sequence>